<organism>
    <name type="scientific">Drosophila melanogaster</name>
    <name type="common">Fruit fly</name>
    <dbReference type="NCBI Taxonomy" id="7227"/>
    <lineage>
        <taxon>Eukaryota</taxon>
        <taxon>Metazoa</taxon>
        <taxon>Ecdysozoa</taxon>
        <taxon>Arthropoda</taxon>
        <taxon>Hexapoda</taxon>
        <taxon>Insecta</taxon>
        <taxon>Pterygota</taxon>
        <taxon>Neoptera</taxon>
        <taxon>Endopterygota</taxon>
        <taxon>Diptera</taxon>
        <taxon>Brachycera</taxon>
        <taxon>Muscomorpha</taxon>
        <taxon>Ephydroidea</taxon>
        <taxon>Drosophilidae</taxon>
        <taxon>Drosophila</taxon>
        <taxon>Sophophora</taxon>
    </lineage>
</organism>
<name>BL1S6_DROME</name>
<comment type="function">
    <text evidence="3 4">Component of the biogenesis of lysosome-related organelles complex-1 (BLOC-1) involved in pigment granule biogenesis and membrane trafficking in synapses (PubMed:20015953, PubMed:28317021). In response to high synaptic activity at neuromuscular junctions, plays a key role in promoting efficient synaptic vesicle recycling and re-formation through early endosomes (PubMed:28317021).</text>
</comment>
<comment type="subunit">
    <text evidence="3">Component of the biogenesis of lysosome-related organelles complex-1 (BLOC-1) composed of Blos1, Blos2, Blos3, Blos4, Dysb, Muted, Pldn and Snapin. Interacts with Blos1, Blos4 and Dysb.</text>
</comment>
<comment type="subcellular location">
    <subcellularLocation>
        <location evidence="4">Synapse</location>
    </subcellularLocation>
    <subcellularLocation>
        <location evidence="4">Cytoplasm</location>
        <location evidence="4">Cytoskeleton</location>
    </subcellularLocation>
    <subcellularLocation>
        <location evidence="4">Cytoplasm</location>
        <location evidence="4">Myofibril</location>
        <location evidence="4">Sarcomere</location>
        <location evidence="4">Z line</location>
    </subcellularLocation>
    <text evidence="4">At the neuromuscular junctions, present at both pre- and postsynaptic compartments where it associates with cytoskeletal neuronal microtubule structures and muscle Z-lines.</text>
</comment>
<comment type="developmental stage">
    <text evidence="4">Expressed throughout development from embryo to adult stages (at protein level) (PubMed:28317021). In larvae, expressed at the neuromuscular junction both pre- and postsynaptically (at protein level) (PubMed:28317021).</text>
</comment>
<comment type="disruption phenotype">
    <text evidence="4">Viable and fertile (PubMed:28317021). In the neuromuscular junctions, results in abnormal tubular endosomal compartments and a reduction in early endosomes which leads to a decrease recycling and recovery of the synaptic vesicle pool and results in failure to sustain neurotransmitter release during high-frequency stimulation (PubMed:28317021). Does not affect synaptic morphology or basal function (PubMed:28317021).</text>
</comment>
<comment type="similarity">
    <text evidence="6">Belongs to the BLOC1S6 family.</text>
</comment>
<dbReference type="EMBL" id="AE014296">
    <property type="protein sequence ID" value="AAF50027.2"/>
    <property type="molecule type" value="Genomic_DNA"/>
</dbReference>
<dbReference type="RefSeq" id="NP_648494.2">
    <property type="nucleotide sequence ID" value="NM_140237.2"/>
</dbReference>
<dbReference type="SMR" id="Q9VTM0"/>
<dbReference type="BioGRID" id="64676">
    <property type="interactions" value="19"/>
</dbReference>
<dbReference type="ComplexPortal" id="CPX-2753">
    <property type="entry name" value="BLOC-1 complex"/>
</dbReference>
<dbReference type="FunCoup" id="Q9VTM0">
    <property type="interactions" value="550"/>
</dbReference>
<dbReference type="IntAct" id="Q9VTM0">
    <property type="interactions" value="6"/>
</dbReference>
<dbReference type="STRING" id="7227.FBpp0289374"/>
<dbReference type="PaxDb" id="7227-FBpp0289374"/>
<dbReference type="EnsemblMetazoa" id="FBtr0300097">
    <property type="protein sequence ID" value="FBpp0289374"/>
    <property type="gene ID" value="FBgn0036192"/>
</dbReference>
<dbReference type="GeneID" id="39315"/>
<dbReference type="KEGG" id="dme:Dmel_CG14133"/>
<dbReference type="UCSC" id="CG14133-RB">
    <property type="organism name" value="d. melanogaster"/>
</dbReference>
<dbReference type="AGR" id="FB:FBgn0036192"/>
<dbReference type="CTD" id="39315"/>
<dbReference type="FlyBase" id="FBgn0036192">
    <property type="gene designation" value="Pldn"/>
</dbReference>
<dbReference type="VEuPathDB" id="VectorBase:FBgn0036192"/>
<dbReference type="eggNOG" id="ENOG502TCAT">
    <property type="taxonomic scope" value="Eukaryota"/>
</dbReference>
<dbReference type="GeneTree" id="ENSGT00510000047812"/>
<dbReference type="HOGENOM" id="CLU_139371_0_0_1"/>
<dbReference type="InParanoid" id="Q9VTM0"/>
<dbReference type="OMA" id="MMSDVKR"/>
<dbReference type="OrthoDB" id="19659at2759"/>
<dbReference type="PhylomeDB" id="Q9VTM0"/>
<dbReference type="BioGRID-ORCS" id="39315">
    <property type="hits" value="0 hits in 1 CRISPR screen"/>
</dbReference>
<dbReference type="GenomeRNAi" id="39315"/>
<dbReference type="PRO" id="PR:Q9VTM0"/>
<dbReference type="Proteomes" id="UP000000803">
    <property type="component" value="Chromosome 3L"/>
</dbReference>
<dbReference type="Bgee" id="FBgn0036192">
    <property type="expression patterns" value="Expressed in adult Malpighian tubule principal cell of lower segment in Malpighian tubule and 35 other cell types or tissues"/>
</dbReference>
<dbReference type="ExpressionAtlas" id="Q9VTM0">
    <property type="expression patterns" value="baseline and differential"/>
</dbReference>
<dbReference type="GO" id="GO:0031083">
    <property type="term" value="C:BLOC-1 complex"/>
    <property type="evidence" value="ECO:0000316"/>
    <property type="project" value="FlyBase"/>
</dbReference>
<dbReference type="GO" id="GO:0005856">
    <property type="term" value="C:cytoskeleton"/>
    <property type="evidence" value="ECO:0007669"/>
    <property type="project" value="UniProtKB-SubCell"/>
</dbReference>
<dbReference type="GO" id="GO:0031594">
    <property type="term" value="C:neuromuscular junction"/>
    <property type="evidence" value="ECO:0000314"/>
    <property type="project" value="SynGO"/>
</dbReference>
<dbReference type="GO" id="GO:0098975">
    <property type="term" value="C:postsynapse of neuromuscular junction"/>
    <property type="evidence" value="ECO:0000314"/>
    <property type="project" value="FlyBase"/>
</dbReference>
<dbReference type="GO" id="GO:0030133">
    <property type="term" value="C:transport vesicle"/>
    <property type="evidence" value="ECO:0000318"/>
    <property type="project" value="GO_Central"/>
</dbReference>
<dbReference type="GO" id="GO:0061174">
    <property type="term" value="C:type I terminal bouton"/>
    <property type="evidence" value="ECO:0000314"/>
    <property type="project" value="FlyBase"/>
</dbReference>
<dbReference type="GO" id="GO:0030018">
    <property type="term" value="C:Z disc"/>
    <property type="evidence" value="ECO:0007669"/>
    <property type="project" value="UniProtKB-SubCell"/>
</dbReference>
<dbReference type="GO" id="GO:0008057">
    <property type="term" value="P:eye pigment granule organization"/>
    <property type="evidence" value="ECO:0000315"/>
    <property type="project" value="UniProtKB"/>
</dbReference>
<dbReference type="GO" id="GO:0046907">
    <property type="term" value="P:intracellular transport"/>
    <property type="evidence" value="ECO:0000318"/>
    <property type="project" value="GO_Central"/>
</dbReference>
<dbReference type="GO" id="GO:0098693">
    <property type="term" value="P:regulation of synaptic vesicle cycle"/>
    <property type="evidence" value="ECO:0000314"/>
    <property type="project" value="SynGO"/>
</dbReference>
<dbReference type="GO" id="GO:0036466">
    <property type="term" value="P:synaptic vesicle recycling via endosome"/>
    <property type="evidence" value="ECO:0000315"/>
    <property type="project" value="FlyBase"/>
</dbReference>
<dbReference type="InterPro" id="IPR017242">
    <property type="entry name" value="BLOC-1_pallidin"/>
</dbReference>
<dbReference type="InterPro" id="IPR028119">
    <property type="entry name" value="Snapin/Pallidin/Snn1"/>
</dbReference>
<dbReference type="PANTHER" id="PTHR31328">
    <property type="entry name" value="BIOGENESIS OF LYSOSOME-RELATED ORGANELLES COMPLEX 1 SUBUNIT 6"/>
    <property type="match status" value="1"/>
</dbReference>
<dbReference type="PANTHER" id="PTHR31328:SF2">
    <property type="entry name" value="BIOGENESIS OF LYSOSOME-RELATED ORGANELLES COMPLEX 1 SUBUNIT 6"/>
    <property type="match status" value="1"/>
</dbReference>
<dbReference type="Pfam" id="PF14712">
    <property type="entry name" value="Snapin_Pallidin"/>
    <property type="match status" value="1"/>
</dbReference>
<dbReference type="PIRSF" id="PIRSF037609">
    <property type="entry name" value="BLOC-1_complex_pallidin"/>
    <property type="match status" value="1"/>
</dbReference>
<keyword id="KW-0175">Coiled coil</keyword>
<keyword id="KW-0963">Cytoplasm</keyword>
<keyword id="KW-0206">Cytoskeleton</keyword>
<keyword id="KW-1185">Reference proteome</keyword>
<keyword id="KW-0770">Synapse</keyword>
<protein>
    <recommendedName>
        <fullName>Biogenesis of lysosome-related organelles complex 1 subunit 6</fullName>
        <shortName>BLOC-1 subunit 6</shortName>
    </recommendedName>
    <alternativeName>
        <fullName>Pallid protein homolog</fullName>
    </alternativeName>
</protein>
<evidence type="ECO:0000255" key="1"/>
<evidence type="ECO:0000256" key="2">
    <source>
        <dbReference type="SAM" id="MobiDB-lite"/>
    </source>
</evidence>
<evidence type="ECO:0000269" key="3">
    <source>
    </source>
</evidence>
<evidence type="ECO:0000269" key="4">
    <source>
    </source>
</evidence>
<evidence type="ECO:0000303" key="5">
    <source>
    </source>
</evidence>
<evidence type="ECO:0000305" key="6"/>
<evidence type="ECO:0000312" key="7">
    <source>
        <dbReference type="FlyBase" id="FBgn0036192"/>
    </source>
</evidence>
<accession>Q9VTM0</accession>
<proteinExistence type="evidence at protein level"/>
<gene>
    <name evidence="5 7" type="primary">Pldn</name>
    <name evidence="7" type="synonym">Pallidin</name>
    <name evidence="7" type="ORF">CG14133</name>
</gene>
<feature type="chain" id="PRO_0000420200" description="Biogenesis of lysosome-related organelles complex 1 subunit 6">
    <location>
        <begin position="1"/>
        <end position="167"/>
    </location>
</feature>
<feature type="region of interest" description="Disordered" evidence="2">
    <location>
        <begin position="1"/>
        <end position="38"/>
    </location>
</feature>
<feature type="coiled-coil region" evidence="1">
    <location>
        <begin position="102"/>
        <end position="160"/>
    </location>
</feature>
<feature type="compositionally biased region" description="Polar residues" evidence="2">
    <location>
        <begin position="1"/>
        <end position="11"/>
    </location>
</feature>
<sequence>MLKSSNINSVLNELPNDPARDSTAQSSHNGKPKQDAETCCSSQDNEVMASLAALQLSAGVLQIAEPPLNHVRTQLRELIGRQNKTYIDLSKEKYKLDCSEVARLNDMMSDVKRYKDKLTKIKKEMQGVYQRTKELKKRAANVAACKQRDYQRKLERLQHEESLIGSQ</sequence>
<reference key="1">
    <citation type="journal article" date="2000" name="Science">
        <title>The genome sequence of Drosophila melanogaster.</title>
        <authorList>
            <person name="Adams M.D."/>
            <person name="Celniker S.E."/>
            <person name="Holt R.A."/>
            <person name="Evans C.A."/>
            <person name="Gocayne J.D."/>
            <person name="Amanatides P.G."/>
            <person name="Scherer S.E."/>
            <person name="Li P.W."/>
            <person name="Hoskins R.A."/>
            <person name="Galle R.F."/>
            <person name="George R.A."/>
            <person name="Lewis S.E."/>
            <person name="Richards S."/>
            <person name="Ashburner M."/>
            <person name="Henderson S.N."/>
            <person name="Sutton G.G."/>
            <person name="Wortman J.R."/>
            <person name="Yandell M.D."/>
            <person name="Zhang Q."/>
            <person name="Chen L.X."/>
            <person name="Brandon R.C."/>
            <person name="Rogers Y.-H.C."/>
            <person name="Blazej R.G."/>
            <person name="Champe M."/>
            <person name="Pfeiffer B.D."/>
            <person name="Wan K.H."/>
            <person name="Doyle C."/>
            <person name="Baxter E.G."/>
            <person name="Helt G."/>
            <person name="Nelson C.R."/>
            <person name="Miklos G.L.G."/>
            <person name="Abril J.F."/>
            <person name="Agbayani A."/>
            <person name="An H.-J."/>
            <person name="Andrews-Pfannkoch C."/>
            <person name="Baldwin D."/>
            <person name="Ballew R.M."/>
            <person name="Basu A."/>
            <person name="Baxendale J."/>
            <person name="Bayraktaroglu L."/>
            <person name="Beasley E.M."/>
            <person name="Beeson K.Y."/>
            <person name="Benos P.V."/>
            <person name="Berman B.P."/>
            <person name="Bhandari D."/>
            <person name="Bolshakov S."/>
            <person name="Borkova D."/>
            <person name="Botchan M.R."/>
            <person name="Bouck J."/>
            <person name="Brokstein P."/>
            <person name="Brottier P."/>
            <person name="Burtis K.C."/>
            <person name="Busam D.A."/>
            <person name="Butler H."/>
            <person name="Cadieu E."/>
            <person name="Center A."/>
            <person name="Chandra I."/>
            <person name="Cherry J.M."/>
            <person name="Cawley S."/>
            <person name="Dahlke C."/>
            <person name="Davenport L.B."/>
            <person name="Davies P."/>
            <person name="de Pablos B."/>
            <person name="Delcher A."/>
            <person name="Deng Z."/>
            <person name="Mays A.D."/>
            <person name="Dew I."/>
            <person name="Dietz S.M."/>
            <person name="Dodson K."/>
            <person name="Doup L.E."/>
            <person name="Downes M."/>
            <person name="Dugan-Rocha S."/>
            <person name="Dunkov B.C."/>
            <person name="Dunn P."/>
            <person name="Durbin K.J."/>
            <person name="Evangelista C.C."/>
            <person name="Ferraz C."/>
            <person name="Ferriera S."/>
            <person name="Fleischmann W."/>
            <person name="Fosler C."/>
            <person name="Gabrielian A.E."/>
            <person name="Garg N.S."/>
            <person name="Gelbart W.M."/>
            <person name="Glasser K."/>
            <person name="Glodek A."/>
            <person name="Gong F."/>
            <person name="Gorrell J.H."/>
            <person name="Gu Z."/>
            <person name="Guan P."/>
            <person name="Harris M."/>
            <person name="Harris N.L."/>
            <person name="Harvey D.A."/>
            <person name="Heiman T.J."/>
            <person name="Hernandez J.R."/>
            <person name="Houck J."/>
            <person name="Hostin D."/>
            <person name="Houston K.A."/>
            <person name="Howland T.J."/>
            <person name="Wei M.-H."/>
            <person name="Ibegwam C."/>
            <person name="Jalali M."/>
            <person name="Kalush F."/>
            <person name="Karpen G.H."/>
            <person name="Ke Z."/>
            <person name="Kennison J.A."/>
            <person name="Ketchum K.A."/>
            <person name="Kimmel B.E."/>
            <person name="Kodira C.D."/>
            <person name="Kraft C.L."/>
            <person name="Kravitz S."/>
            <person name="Kulp D."/>
            <person name="Lai Z."/>
            <person name="Lasko P."/>
            <person name="Lei Y."/>
            <person name="Levitsky A.A."/>
            <person name="Li J.H."/>
            <person name="Li Z."/>
            <person name="Liang Y."/>
            <person name="Lin X."/>
            <person name="Liu X."/>
            <person name="Mattei B."/>
            <person name="McIntosh T.C."/>
            <person name="McLeod M.P."/>
            <person name="McPherson D."/>
            <person name="Merkulov G."/>
            <person name="Milshina N.V."/>
            <person name="Mobarry C."/>
            <person name="Morris J."/>
            <person name="Moshrefi A."/>
            <person name="Mount S.M."/>
            <person name="Moy M."/>
            <person name="Murphy B."/>
            <person name="Murphy L."/>
            <person name="Muzny D.M."/>
            <person name="Nelson D.L."/>
            <person name="Nelson D.R."/>
            <person name="Nelson K.A."/>
            <person name="Nixon K."/>
            <person name="Nusskern D.R."/>
            <person name="Pacleb J.M."/>
            <person name="Palazzolo M."/>
            <person name="Pittman G.S."/>
            <person name="Pan S."/>
            <person name="Pollard J."/>
            <person name="Puri V."/>
            <person name="Reese M.G."/>
            <person name="Reinert K."/>
            <person name="Remington K."/>
            <person name="Saunders R.D.C."/>
            <person name="Scheeler F."/>
            <person name="Shen H."/>
            <person name="Shue B.C."/>
            <person name="Siden-Kiamos I."/>
            <person name="Simpson M."/>
            <person name="Skupski M.P."/>
            <person name="Smith T.J."/>
            <person name="Spier E."/>
            <person name="Spradling A.C."/>
            <person name="Stapleton M."/>
            <person name="Strong R."/>
            <person name="Sun E."/>
            <person name="Svirskas R."/>
            <person name="Tector C."/>
            <person name="Turner R."/>
            <person name="Venter E."/>
            <person name="Wang A.H."/>
            <person name="Wang X."/>
            <person name="Wang Z.-Y."/>
            <person name="Wassarman D.A."/>
            <person name="Weinstock G.M."/>
            <person name="Weissenbach J."/>
            <person name="Williams S.M."/>
            <person name="Woodage T."/>
            <person name="Worley K.C."/>
            <person name="Wu D."/>
            <person name="Yang S."/>
            <person name="Yao Q.A."/>
            <person name="Ye J."/>
            <person name="Yeh R.-F."/>
            <person name="Zaveri J.S."/>
            <person name="Zhan M."/>
            <person name="Zhang G."/>
            <person name="Zhao Q."/>
            <person name="Zheng L."/>
            <person name="Zheng X.H."/>
            <person name="Zhong F.N."/>
            <person name="Zhong W."/>
            <person name="Zhou X."/>
            <person name="Zhu S.C."/>
            <person name="Zhu X."/>
            <person name="Smith H.O."/>
            <person name="Gibbs R.A."/>
            <person name="Myers E.W."/>
            <person name="Rubin G.M."/>
            <person name="Venter J.C."/>
        </authorList>
    </citation>
    <scope>NUCLEOTIDE SEQUENCE [LARGE SCALE GENOMIC DNA]</scope>
    <source>
        <strain>Berkeley</strain>
    </source>
</reference>
<reference key="2">
    <citation type="journal article" date="2002" name="Genome Biol.">
        <title>Annotation of the Drosophila melanogaster euchromatic genome: a systematic review.</title>
        <authorList>
            <person name="Misra S."/>
            <person name="Crosby M.A."/>
            <person name="Mungall C.J."/>
            <person name="Matthews B.B."/>
            <person name="Campbell K.S."/>
            <person name="Hradecky P."/>
            <person name="Huang Y."/>
            <person name="Kaminker J.S."/>
            <person name="Millburn G.H."/>
            <person name="Prochnik S.E."/>
            <person name="Smith C.D."/>
            <person name="Tupy J.L."/>
            <person name="Whitfield E.J."/>
            <person name="Bayraktaroglu L."/>
            <person name="Berman B.P."/>
            <person name="Bettencourt B.R."/>
            <person name="Celniker S.E."/>
            <person name="de Grey A.D.N.J."/>
            <person name="Drysdale R.A."/>
            <person name="Harris N.L."/>
            <person name="Richter J."/>
            <person name="Russo S."/>
            <person name="Schroeder A.J."/>
            <person name="Shu S.Q."/>
            <person name="Stapleton M."/>
            <person name="Yamada C."/>
            <person name="Ashburner M."/>
            <person name="Gelbart W.M."/>
            <person name="Rubin G.M."/>
            <person name="Lewis S.E."/>
        </authorList>
    </citation>
    <scope>GENOME REANNOTATION</scope>
    <source>
        <strain>Berkeley</strain>
    </source>
</reference>
<reference key="3">
    <citation type="journal article" date="2010" name="Hum. Mol. Genet.">
        <title>Genetic modifiers of abnormal organelle biogenesis in a Drosophila model of BLOC-1 deficiency.</title>
        <authorList>
            <person name="Cheli V.T."/>
            <person name="Daniels R.W."/>
            <person name="Godoy R."/>
            <person name="Hoyle D.J."/>
            <person name="Kandachar V."/>
            <person name="Starcevic M."/>
            <person name="Martinez-Agosto J.A."/>
            <person name="Poole S."/>
            <person name="DiAntonio A."/>
            <person name="Lloyd V.K."/>
            <person name="Chang H.C."/>
            <person name="Krantz D.E."/>
            <person name="Dell'Angelica E.C."/>
        </authorList>
    </citation>
    <scope>IDENTIFICATION IN THE BLOC-1 COMPLEX</scope>
    <scope>FUNCTION</scope>
    <scope>INTERACTION WITH BLOS1; BLOS4 AND DYSB</scope>
</reference>
<reference key="4">
    <citation type="journal article" date="2017" name="ENeuro">
        <title>The BLOC-1 Subunit Pallidin Facilitates Activity-Dependent Synaptic Vesicle Recycling.</title>
        <authorList>
            <person name="Chen X."/>
            <person name="Ma W."/>
            <person name="Zhang S."/>
            <person name="Paluch J."/>
            <person name="Guo W."/>
            <person name="Dickman D.K."/>
        </authorList>
    </citation>
    <scope>FUNCTION</scope>
    <scope>SUBCELLULAR LOCATION</scope>
    <scope>DEVELOPMENTAL STAGE</scope>
    <scope>DISRUPTION PHENOTYPE</scope>
</reference>